<reference key="1">
    <citation type="submission" date="2006-09" db="EMBL/GenBank/DDBJ databases">
        <authorList>
            <consortium name="The Klebsiella pneumonia Genome Sequencing Project"/>
            <person name="McClelland M."/>
            <person name="Sanderson E.K."/>
            <person name="Spieth J."/>
            <person name="Clifton W.S."/>
            <person name="Latreille P."/>
            <person name="Sabo A."/>
            <person name="Pepin K."/>
            <person name="Bhonagiri V."/>
            <person name="Porwollik S."/>
            <person name="Ali J."/>
            <person name="Wilson R.K."/>
        </authorList>
    </citation>
    <scope>NUCLEOTIDE SEQUENCE [LARGE SCALE GENOMIC DNA]</scope>
    <source>
        <strain>ATCC 700721 / MGH 78578</strain>
    </source>
</reference>
<accession>A6TGC2</accession>
<dbReference type="EC" id="3.4.25.2" evidence="1"/>
<dbReference type="EMBL" id="CP000647">
    <property type="protein sequence ID" value="ABR79606.1"/>
    <property type="molecule type" value="Genomic_DNA"/>
</dbReference>
<dbReference type="RefSeq" id="WP_002882918.1">
    <property type="nucleotide sequence ID" value="NC_009648.1"/>
</dbReference>
<dbReference type="SMR" id="A6TGC2"/>
<dbReference type="STRING" id="272620.KPN_04227"/>
<dbReference type="MEROPS" id="T01.006"/>
<dbReference type="jPOST" id="A6TGC2"/>
<dbReference type="PaxDb" id="272620-KPN_04227"/>
<dbReference type="EnsemblBacteria" id="ABR79606">
    <property type="protein sequence ID" value="ABR79606"/>
    <property type="gene ID" value="KPN_04227"/>
</dbReference>
<dbReference type="GeneID" id="93275764"/>
<dbReference type="KEGG" id="kpn:KPN_04227"/>
<dbReference type="HOGENOM" id="CLU_093872_1_0_6"/>
<dbReference type="Proteomes" id="UP000000265">
    <property type="component" value="Chromosome"/>
</dbReference>
<dbReference type="GO" id="GO:0009376">
    <property type="term" value="C:HslUV protease complex"/>
    <property type="evidence" value="ECO:0007669"/>
    <property type="project" value="UniProtKB-UniRule"/>
</dbReference>
<dbReference type="GO" id="GO:0005839">
    <property type="term" value="C:proteasome core complex"/>
    <property type="evidence" value="ECO:0007669"/>
    <property type="project" value="InterPro"/>
</dbReference>
<dbReference type="GO" id="GO:0046872">
    <property type="term" value="F:metal ion binding"/>
    <property type="evidence" value="ECO:0007669"/>
    <property type="project" value="UniProtKB-KW"/>
</dbReference>
<dbReference type="GO" id="GO:0004298">
    <property type="term" value="F:threonine-type endopeptidase activity"/>
    <property type="evidence" value="ECO:0007669"/>
    <property type="project" value="UniProtKB-KW"/>
</dbReference>
<dbReference type="GO" id="GO:0051603">
    <property type="term" value="P:proteolysis involved in protein catabolic process"/>
    <property type="evidence" value="ECO:0007669"/>
    <property type="project" value="InterPro"/>
</dbReference>
<dbReference type="CDD" id="cd01913">
    <property type="entry name" value="protease_HslV"/>
    <property type="match status" value="1"/>
</dbReference>
<dbReference type="FunFam" id="3.60.20.10:FF:000002">
    <property type="entry name" value="ATP-dependent protease subunit HslV"/>
    <property type="match status" value="1"/>
</dbReference>
<dbReference type="Gene3D" id="3.60.20.10">
    <property type="entry name" value="Glutamine Phosphoribosylpyrophosphate, subunit 1, domain 1"/>
    <property type="match status" value="1"/>
</dbReference>
<dbReference type="HAMAP" id="MF_00248">
    <property type="entry name" value="HslV"/>
    <property type="match status" value="1"/>
</dbReference>
<dbReference type="InterPro" id="IPR022281">
    <property type="entry name" value="ATP-dep_Prtase_HsIV_su"/>
</dbReference>
<dbReference type="InterPro" id="IPR029055">
    <property type="entry name" value="Ntn_hydrolases_N"/>
</dbReference>
<dbReference type="InterPro" id="IPR001353">
    <property type="entry name" value="Proteasome_sua/b"/>
</dbReference>
<dbReference type="InterPro" id="IPR023333">
    <property type="entry name" value="Proteasome_suB-type"/>
</dbReference>
<dbReference type="NCBIfam" id="TIGR03692">
    <property type="entry name" value="ATP_dep_HslV"/>
    <property type="match status" value="1"/>
</dbReference>
<dbReference type="NCBIfam" id="NF003964">
    <property type="entry name" value="PRK05456.1"/>
    <property type="match status" value="1"/>
</dbReference>
<dbReference type="PANTHER" id="PTHR32194:SF0">
    <property type="entry name" value="ATP-DEPENDENT PROTEASE SUBUNIT HSLV"/>
    <property type="match status" value="1"/>
</dbReference>
<dbReference type="PANTHER" id="PTHR32194">
    <property type="entry name" value="METALLOPROTEASE TLDD"/>
    <property type="match status" value="1"/>
</dbReference>
<dbReference type="Pfam" id="PF00227">
    <property type="entry name" value="Proteasome"/>
    <property type="match status" value="1"/>
</dbReference>
<dbReference type="PIRSF" id="PIRSF039093">
    <property type="entry name" value="HslV"/>
    <property type="match status" value="1"/>
</dbReference>
<dbReference type="SUPFAM" id="SSF56235">
    <property type="entry name" value="N-terminal nucleophile aminohydrolases (Ntn hydrolases)"/>
    <property type="match status" value="1"/>
</dbReference>
<dbReference type="PROSITE" id="PS51476">
    <property type="entry name" value="PROTEASOME_BETA_2"/>
    <property type="match status" value="1"/>
</dbReference>
<evidence type="ECO:0000255" key="1">
    <source>
        <dbReference type="HAMAP-Rule" id="MF_00248"/>
    </source>
</evidence>
<protein>
    <recommendedName>
        <fullName evidence="1">ATP-dependent protease subunit HslV</fullName>
        <ecNumber evidence="1">3.4.25.2</ecNumber>
    </recommendedName>
</protein>
<organism>
    <name type="scientific">Klebsiella pneumoniae subsp. pneumoniae (strain ATCC 700721 / MGH 78578)</name>
    <dbReference type="NCBI Taxonomy" id="272620"/>
    <lineage>
        <taxon>Bacteria</taxon>
        <taxon>Pseudomonadati</taxon>
        <taxon>Pseudomonadota</taxon>
        <taxon>Gammaproteobacteria</taxon>
        <taxon>Enterobacterales</taxon>
        <taxon>Enterobacteriaceae</taxon>
        <taxon>Klebsiella/Raoultella group</taxon>
        <taxon>Klebsiella</taxon>
        <taxon>Klebsiella pneumoniae complex</taxon>
    </lineage>
</organism>
<gene>
    <name evidence="1" type="primary">hslV</name>
    <name type="ordered locus">KPN78578_41820</name>
    <name type="ORF">KPN_04227</name>
</gene>
<comment type="function">
    <text evidence="1">Protease subunit of a proteasome-like degradation complex believed to be a general protein degrading machinery.</text>
</comment>
<comment type="catalytic activity">
    <reaction evidence="1">
        <text>ATP-dependent cleavage of peptide bonds with broad specificity.</text>
        <dbReference type="EC" id="3.4.25.2"/>
    </reaction>
</comment>
<comment type="activity regulation">
    <text evidence="1">Allosterically activated by HslU binding.</text>
</comment>
<comment type="subunit">
    <text evidence="1">A double ring-shaped homohexamer of HslV is capped on each side by a ring-shaped HslU homohexamer. The assembly of the HslU/HslV complex is dependent on binding of ATP.</text>
</comment>
<comment type="subcellular location">
    <subcellularLocation>
        <location evidence="1">Cytoplasm</location>
    </subcellularLocation>
</comment>
<comment type="similarity">
    <text evidence="1">Belongs to the peptidase T1B family. HslV subfamily.</text>
</comment>
<keyword id="KW-0021">Allosteric enzyme</keyword>
<keyword id="KW-0963">Cytoplasm</keyword>
<keyword id="KW-0378">Hydrolase</keyword>
<keyword id="KW-0479">Metal-binding</keyword>
<keyword id="KW-0645">Protease</keyword>
<keyword id="KW-0915">Sodium</keyword>
<keyword id="KW-0888">Threonine protease</keyword>
<proteinExistence type="inferred from homology"/>
<sequence>MTTIVSVRRNGHVVIAGDGQATLGNTVMKGNVKKVRRLYNDKVIAGFAGGTADAFTLFELFERKLEMHQGHLVKAAVELAKDWRTDRMLRKLEALLAVADENASLIITGNGDVVQPENDLIAIGSGGPYAQAAARALLENTDMGARDIAEKALDIAGDICIYTNHFHTIEELPSKA</sequence>
<feature type="chain" id="PRO_1000012624" description="ATP-dependent protease subunit HslV">
    <location>
        <begin position="1"/>
        <end position="176"/>
    </location>
</feature>
<feature type="active site" evidence="1">
    <location>
        <position position="2"/>
    </location>
</feature>
<feature type="binding site" evidence="1">
    <location>
        <position position="157"/>
    </location>
    <ligand>
        <name>Na(+)</name>
        <dbReference type="ChEBI" id="CHEBI:29101"/>
    </ligand>
</feature>
<feature type="binding site" evidence="1">
    <location>
        <position position="160"/>
    </location>
    <ligand>
        <name>Na(+)</name>
        <dbReference type="ChEBI" id="CHEBI:29101"/>
    </ligand>
</feature>
<feature type="binding site" evidence="1">
    <location>
        <position position="163"/>
    </location>
    <ligand>
        <name>Na(+)</name>
        <dbReference type="ChEBI" id="CHEBI:29101"/>
    </ligand>
</feature>
<name>HSLV_KLEP7</name>